<name>T163A_DANRE</name>
<sequence>MRLKPHEAQSYRKKALWVSWISIVVTLILAVAGFTVSFMRHSASAFGFAFDATLDVLSSIIVLWRYSNAAAVHSAHREYIACVILGVIFILSSLCILGKAIHDLATKLLPEVDDFLFSVSIVSGLMCVILAVAKFMLGRILTSRALITDGFNSMVGGIMGFSILISAEVFRHYPNVWYLDGTIGILIGLVIQAYGVKLLVDMIPRVRQTRNYERFE</sequence>
<reference key="1">
    <citation type="journal article" date="2013" name="Nature">
        <title>The zebrafish reference genome sequence and its relationship to the human genome.</title>
        <authorList>
            <person name="Howe K."/>
            <person name="Clark M.D."/>
            <person name="Torroja C.F."/>
            <person name="Torrance J."/>
            <person name="Berthelot C."/>
            <person name="Muffato M."/>
            <person name="Collins J.E."/>
            <person name="Humphray S."/>
            <person name="McLaren K."/>
            <person name="Matthews L."/>
            <person name="McLaren S."/>
            <person name="Sealy I."/>
            <person name="Caccamo M."/>
            <person name="Churcher C."/>
            <person name="Scott C."/>
            <person name="Barrett J.C."/>
            <person name="Koch R."/>
            <person name="Rauch G.J."/>
            <person name="White S."/>
            <person name="Chow W."/>
            <person name="Kilian B."/>
            <person name="Quintais L.T."/>
            <person name="Guerra-Assuncao J.A."/>
            <person name="Zhou Y."/>
            <person name="Gu Y."/>
            <person name="Yen J."/>
            <person name="Vogel J.H."/>
            <person name="Eyre T."/>
            <person name="Redmond S."/>
            <person name="Banerjee R."/>
            <person name="Chi J."/>
            <person name="Fu B."/>
            <person name="Langley E."/>
            <person name="Maguire S.F."/>
            <person name="Laird G.K."/>
            <person name="Lloyd D."/>
            <person name="Kenyon E."/>
            <person name="Donaldson S."/>
            <person name="Sehra H."/>
            <person name="Almeida-King J."/>
            <person name="Loveland J."/>
            <person name="Trevanion S."/>
            <person name="Jones M."/>
            <person name="Quail M."/>
            <person name="Willey D."/>
            <person name="Hunt A."/>
            <person name="Burton J."/>
            <person name="Sims S."/>
            <person name="McLay K."/>
            <person name="Plumb B."/>
            <person name="Davis J."/>
            <person name="Clee C."/>
            <person name="Oliver K."/>
            <person name="Clark R."/>
            <person name="Riddle C."/>
            <person name="Elliot D."/>
            <person name="Threadgold G."/>
            <person name="Harden G."/>
            <person name="Ware D."/>
            <person name="Begum S."/>
            <person name="Mortimore B."/>
            <person name="Kerry G."/>
            <person name="Heath P."/>
            <person name="Phillimore B."/>
            <person name="Tracey A."/>
            <person name="Corby N."/>
            <person name="Dunn M."/>
            <person name="Johnson C."/>
            <person name="Wood J."/>
            <person name="Clark S."/>
            <person name="Pelan S."/>
            <person name="Griffiths G."/>
            <person name="Smith M."/>
            <person name="Glithero R."/>
            <person name="Howden P."/>
            <person name="Barker N."/>
            <person name="Lloyd C."/>
            <person name="Stevens C."/>
            <person name="Harley J."/>
            <person name="Holt K."/>
            <person name="Panagiotidis G."/>
            <person name="Lovell J."/>
            <person name="Beasley H."/>
            <person name="Henderson C."/>
            <person name="Gordon D."/>
            <person name="Auger K."/>
            <person name="Wright D."/>
            <person name="Collins J."/>
            <person name="Raisen C."/>
            <person name="Dyer L."/>
            <person name="Leung K."/>
            <person name="Robertson L."/>
            <person name="Ambridge K."/>
            <person name="Leongamornlert D."/>
            <person name="McGuire S."/>
            <person name="Gilderthorp R."/>
            <person name="Griffiths C."/>
            <person name="Manthravadi D."/>
            <person name="Nichol S."/>
            <person name="Barker G."/>
            <person name="Whitehead S."/>
            <person name="Kay M."/>
            <person name="Brown J."/>
            <person name="Murnane C."/>
            <person name="Gray E."/>
            <person name="Humphries M."/>
            <person name="Sycamore N."/>
            <person name="Barker D."/>
            <person name="Saunders D."/>
            <person name="Wallis J."/>
            <person name="Babbage A."/>
            <person name="Hammond S."/>
            <person name="Mashreghi-Mohammadi M."/>
            <person name="Barr L."/>
            <person name="Martin S."/>
            <person name="Wray P."/>
            <person name="Ellington A."/>
            <person name="Matthews N."/>
            <person name="Ellwood M."/>
            <person name="Woodmansey R."/>
            <person name="Clark G."/>
            <person name="Cooper J."/>
            <person name="Tromans A."/>
            <person name="Grafham D."/>
            <person name="Skuce C."/>
            <person name="Pandian R."/>
            <person name="Andrews R."/>
            <person name="Harrison E."/>
            <person name="Kimberley A."/>
            <person name="Garnett J."/>
            <person name="Fosker N."/>
            <person name="Hall R."/>
            <person name="Garner P."/>
            <person name="Kelly D."/>
            <person name="Bird C."/>
            <person name="Palmer S."/>
            <person name="Gehring I."/>
            <person name="Berger A."/>
            <person name="Dooley C.M."/>
            <person name="Ersan-Urun Z."/>
            <person name="Eser C."/>
            <person name="Geiger H."/>
            <person name="Geisler M."/>
            <person name="Karotki L."/>
            <person name="Kirn A."/>
            <person name="Konantz J."/>
            <person name="Konantz M."/>
            <person name="Oberlander M."/>
            <person name="Rudolph-Geiger S."/>
            <person name="Teucke M."/>
            <person name="Lanz C."/>
            <person name="Raddatz G."/>
            <person name="Osoegawa K."/>
            <person name="Zhu B."/>
            <person name="Rapp A."/>
            <person name="Widaa S."/>
            <person name="Langford C."/>
            <person name="Yang F."/>
            <person name="Schuster S.C."/>
            <person name="Carter N.P."/>
            <person name="Harrow J."/>
            <person name="Ning Z."/>
            <person name="Herrero J."/>
            <person name="Searle S.M."/>
            <person name="Enright A."/>
            <person name="Geisler R."/>
            <person name="Plasterk R.H."/>
            <person name="Lee C."/>
            <person name="Westerfield M."/>
            <person name="de Jong P.J."/>
            <person name="Zon L.I."/>
            <person name="Postlethwait J.H."/>
            <person name="Nusslein-Volhard C."/>
            <person name="Hubbard T.J."/>
            <person name="Roest Crollius H."/>
            <person name="Rogers J."/>
            <person name="Stemple D.L."/>
        </authorList>
    </citation>
    <scope>NUCLEOTIDE SEQUENCE [LARGE SCALE GENOMIC DNA]</scope>
    <source>
        <strain>Tuebingen</strain>
    </source>
</reference>
<reference key="2">
    <citation type="journal article" date="2022" name="Cells">
        <title>Functional study of TMEM163 gene variants associated with hypomyelination leukodystrophy.</title>
        <authorList>
            <person name="Yan H."/>
            <person name="Yang S."/>
            <person name="Hou Y."/>
            <person name="Ali S."/>
            <person name="Escobar A."/>
            <person name="Gao K."/>
            <person name="Duan R."/>
            <person name="Kubisiak T."/>
            <person name="Wang J."/>
            <person name="Zhang Y."/>
            <person name="Xiao J."/>
            <person name="Jiang Y."/>
            <person name="Zhang T."/>
            <person name="Wu Y."/>
            <person name="Burmeister M."/>
            <person name="Wang Q."/>
            <person name="Cuajungco M.P."/>
            <person name="Wang J."/>
        </authorList>
    </citation>
    <scope>FUNCTION</scope>
    <scope>DISRUPTION PHENOTYPE</scope>
    <scope>DEVELOPMENTAL STAGE</scope>
</reference>
<dbReference type="EMBL" id="BX936418">
    <property type="status" value="NOT_ANNOTATED_CDS"/>
    <property type="molecule type" value="Genomic_DNA"/>
</dbReference>
<dbReference type="EMBL" id="CR392363">
    <property type="status" value="NOT_ANNOTATED_CDS"/>
    <property type="molecule type" value="Genomic_DNA"/>
</dbReference>
<dbReference type="RefSeq" id="NP_001122008.1">
    <property type="nucleotide sequence ID" value="NM_001128536.1"/>
</dbReference>
<dbReference type="SMR" id="B0UY98"/>
<dbReference type="Ensembl" id="ENSDART00000113241">
    <property type="protein sequence ID" value="ENSDARP00000102143"/>
    <property type="gene ID" value="ENSDARG00000079858"/>
</dbReference>
<dbReference type="Ensembl" id="ENSDART00000137231">
    <property type="protein sequence ID" value="ENSDARP00000121935"/>
    <property type="gene ID" value="ENSDARG00000079858"/>
</dbReference>
<dbReference type="GeneID" id="564964"/>
<dbReference type="KEGG" id="dre:564964"/>
<dbReference type="AGR" id="ZFIN:ZDB-GENE-081104-429"/>
<dbReference type="CTD" id="564964"/>
<dbReference type="ZFIN" id="ZDB-GENE-081104-429">
    <property type="gene designation" value="tmem163a"/>
</dbReference>
<dbReference type="eggNOG" id="ENOG502QW7B">
    <property type="taxonomic scope" value="Eukaryota"/>
</dbReference>
<dbReference type="HOGENOM" id="CLU_081161_0_0_1"/>
<dbReference type="OrthoDB" id="5980560at2759"/>
<dbReference type="TreeFam" id="TF330782"/>
<dbReference type="PRO" id="PR:B0UY98"/>
<dbReference type="Proteomes" id="UP000000437">
    <property type="component" value="Alternate scaffold 9"/>
</dbReference>
<dbReference type="Proteomes" id="UP000000437">
    <property type="component" value="Chromosome 9"/>
</dbReference>
<dbReference type="Bgee" id="ENSDARG00000079858">
    <property type="expression patterns" value="Expressed in retina and 6 other cell types or tissues"/>
</dbReference>
<dbReference type="GO" id="GO:0031901">
    <property type="term" value="C:early endosome membrane"/>
    <property type="evidence" value="ECO:0007669"/>
    <property type="project" value="UniProtKB-SubCell"/>
</dbReference>
<dbReference type="GO" id="GO:0031902">
    <property type="term" value="C:late endosome membrane"/>
    <property type="evidence" value="ECO:0007669"/>
    <property type="project" value="UniProtKB-SubCell"/>
</dbReference>
<dbReference type="GO" id="GO:0005765">
    <property type="term" value="C:lysosomal membrane"/>
    <property type="evidence" value="ECO:0007669"/>
    <property type="project" value="UniProtKB-SubCell"/>
</dbReference>
<dbReference type="GO" id="GO:0005886">
    <property type="term" value="C:plasma membrane"/>
    <property type="evidence" value="ECO:0007669"/>
    <property type="project" value="UniProtKB-SubCell"/>
</dbReference>
<dbReference type="GO" id="GO:0030672">
    <property type="term" value="C:synaptic vesicle membrane"/>
    <property type="evidence" value="ECO:0000318"/>
    <property type="project" value="GO_Central"/>
</dbReference>
<dbReference type="GO" id="GO:0008270">
    <property type="term" value="F:zinc ion binding"/>
    <property type="evidence" value="ECO:0000318"/>
    <property type="project" value="GO_Central"/>
</dbReference>
<dbReference type="GO" id="GO:0042552">
    <property type="term" value="P:myelination"/>
    <property type="evidence" value="ECO:0000316"/>
    <property type="project" value="ZFIN"/>
</dbReference>
<dbReference type="GO" id="GO:0014003">
    <property type="term" value="P:oligodendrocyte development"/>
    <property type="evidence" value="ECO:0000316"/>
    <property type="project" value="ZFIN"/>
</dbReference>
<dbReference type="Gene3D" id="1.20.1510.10">
    <property type="entry name" value="Cation efflux protein transmembrane domain"/>
    <property type="match status" value="1"/>
</dbReference>
<dbReference type="InterPro" id="IPR027469">
    <property type="entry name" value="Cation_efflux_TMD_sf"/>
</dbReference>
<dbReference type="InterPro" id="IPR026765">
    <property type="entry name" value="Tmem163"/>
</dbReference>
<dbReference type="PANTHER" id="PTHR31937">
    <property type="entry name" value="TRANSMEMBRANE PROTEIN 163"/>
    <property type="match status" value="1"/>
</dbReference>
<dbReference type="PANTHER" id="PTHR31937:SF2">
    <property type="entry name" value="TRANSMEMBRANE PROTEIN 163"/>
    <property type="match status" value="1"/>
</dbReference>
<dbReference type="SUPFAM" id="SSF161111">
    <property type="entry name" value="Cation efflux protein transmembrane domain-like"/>
    <property type="match status" value="1"/>
</dbReference>
<evidence type="ECO:0000250" key="1">
    <source>
        <dbReference type="UniProtKB" id="A9CMA6"/>
    </source>
</evidence>
<evidence type="ECO:0000250" key="2">
    <source>
        <dbReference type="UniProtKB" id="Q8C996"/>
    </source>
</evidence>
<evidence type="ECO:0000250" key="3">
    <source>
        <dbReference type="UniProtKB" id="Q8TC26"/>
    </source>
</evidence>
<evidence type="ECO:0000255" key="4"/>
<evidence type="ECO:0000269" key="5">
    <source>
    </source>
</evidence>
<evidence type="ECO:0000305" key="6"/>
<evidence type="ECO:0000312" key="7">
    <source>
        <dbReference type="ZFIN" id="ZDB-GENE-081104-429"/>
    </source>
</evidence>
<accession>B0UY98</accession>
<accession>A0A8M1NHN3</accession>
<accession>F1Q596</accession>
<feature type="chain" id="PRO_0000458277" description="Transmembrane protein 163a">
    <location>
        <begin position="1"/>
        <end position="216"/>
    </location>
</feature>
<feature type="topological domain" description="Cytoplasmic" evidence="6">
    <location>
        <begin position="1"/>
        <end position="15"/>
    </location>
</feature>
<feature type="transmembrane region" description="Helical" evidence="4">
    <location>
        <begin position="16"/>
        <end position="36"/>
    </location>
</feature>
<feature type="topological domain" description="Extracellular" evidence="6">
    <location>
        <begin position="37"/>
        <end position="43"/>
    </location>
</feature>
<feature type="transmembrane region" description="Helical" evidence="4">
    <location>
        <begin position="44"/>
        <end position="64"/>
    </location>
</feature>
<feature type="topological domain" description="Cytoplasmic" evidence="6">
    <location>
        <begin position="65"/>
        <end position="77"/>
    </location>
</feature>
<feature type="transmembrane region" description="Helical" evidence="4">
    <location>
        <begin position="78"/>
        <end position="98"/>
    </location>
</feature>
<feature type="topological domain" description="Extracellular" evidence="6">
    <location>
        <begin position="99"/>
        <end position="114"/>
    </location>
</feature>
<feature type="transmembrane region" description="Helical" evidence="4">
    <location>
        <begin position="115"/>
        <end position="135"/>
    </location>
</feature>
<feature type="topological domain" description="Cytoplasmic" evidence="6">
    <location>
        <begin position="136"/>
        <end position="144"/>
    </location>
</feature>
<feature type="transmembrane region" description="Helical" evidence="4">
    <location>
        <begin position="145"/>
        <end position="165"/>
    </location>
</feature>
<feature type="topological domain" description="Extracellular" evidence="6">
    <location>
        <begin position="166"/>
        <end position="182"/>
    </location>
</feature>
<feature type="transmembrane region" description="Helical" evidence="4">
    <location>
        <begin position="183"/>
        <end position="203"/>
    </location>
</feature>
<feature type="topological domain" description="Cytoplasmic" evidence="6">
    <location>
        <begin position="204"/>
        <end position="216"/>
    </location>
</feature>
<proteinExistence type="evidence at transcript level"/>
<gene>
    <name evidence="7" type="primary">tmem163a</name>
</gene>
<organism>
    <name type="scientific">Danio rerio</name>
    <name type="common">Zebrafish</name>
    <name type="synonym">Brachydanio rerio</name>
    <dbReference type="NCBI Taxonomy" id="7955"/>
    <lineage>
        <taxon>Eukaryota</taxon>
        <taxon>Metazoa</taxon>
        <taxon>Chordata</taxon>
        <taxon>Craniata</taxon>
        <taxon>Vertebrata</taxon>
        <taxon>Euteleostomi</taxon>
        <taxon>Actinopterygii</taxon>
        <taxon>Neopterygii</taxon>
        <taxon>Teleostei</taxon>
        <taxon>Ostariophysi</taxon>
        <taxon>Cypriniformes</taxon>
        <taxon>Danionidae</taxon>
        <taxon>Danioninae</taxon>
        <taxon>Danio</taxon>
    </lineage>
</organism>
<protein>
    <recommendedName>
        <fullName evidence="7">Transmembrane protein 163a</fullName>
    </recommendedName>
</protein>
<comment type="function">
    <text evidence="1 3 5">Zinc ion transporter that mediates zinc efflux and plays a crucial role in intracellular zinc homeostasis (By similarity). Binds the divalent cations Zn(2+), Ni(2+), and to a minor extent Cu(2+) (By similarity). Is a functional modulator of P2X purinoceptors, including P2RX1, P2RX3, P2RX4 and P2RX7 (By similarity). Plays a role in central nervous system development and is required for myelination, and survival and proliferation of oligodendrocytes (PubMed:35455965).</text>
</comment>
<comment type="catalytic activity">
    <reaction evidence="3">
        <text>Zn(2+)(in) = Zn(2+)(out)</text>
        <dbReference type="Rhea" id="RHEA:29351"/>
        <dbReference type="ChEBI" id="CHEBI:29105"/>
    </reaction>
    <physiologicalReaction direction="left-to-right" evidence="3">
        <dbReference type="Rhea" id="RHEA:29352"/>
    </physiologicalReaction>
</comment>
<comment type="subcellular location">
    <subcellularLocation>
        <location evidence="2">Cytoplasmic vesicle</location>
        <location evidence="2">Secretory vesicle</location>
        <location evidence="2">Synaptic vesicle membrane</location>
        <topology evidence="4">Multi-pass membrane protein</topology>
    </subcellularLocation>
    <subcellularLocation>
        <location evidence="1">Early endosome membrane</location>
        <topology evidence="4">Multi-pass membrane protein</topology>
    </subcellularLocation>
    <subcellularLocation>
        <location evidence="3">Late endosome membrane</location>
        <topology evidence="4">Multi-pass membrane protein</topology>
    </subcellularLocation>
    <subcellularLocation>
        <location evidence="3">Lysosome membrane</location>
        <topology evidence="4">Multi-pass membrane protein</topology>
    </subcellularLocation>
    <subcellularLocation>
        <location evidence="3">Cell membrane</location>
        <topology evidence="4">Multi-pass membrane protein</topology>
    </subcellularLocation>
    <text evidence="1">Glutamatergic synaptic vesicles.</text>
</comment>
<comment type="developmental stage">
    <text evidence="5">At 24 hours post-fertilization (hpf), it is mainly expressed in the central nervous system and Rohon-Beard sensory neurons. It is detected in the brain and motor neurons of the spinal cord at 48 hpf.</text>
</comment>
<comment type="disruption phenotype">
    <text evidence="5">Morpholino tmem163a knockdown severely affects central nervous system development. Morphant larvae display locomotor disability, decreased survival, and myelin deficits associated with a reduced number of oligodendrocytes.</text>
</comment>
<comment type="similarity">
    <text evidence="6">Belongs to the TMEM163 family.</text>
</comment>
<keyword id="KW-1003">Cell membrane</keyword>
<keyword id="KW-0968">Cytoplasmic vesicle</keyword>
<keyword id="KW-0967">Endosome</keyword>
<keyword id="KW-0458">Lysosome</keyword>
<keyword id="KW-0472">Membrane</keyword>
<keyword id="KW-1185">Reference proteome</keyword>
<keyword id="KW-0770">Synapse</keyword>
<keyword id="KW-0812">Transmembrane</keyword>
<keyword id="KW-1133">Transmembrane helix</keyword>
<keyword id="KW-0813">Transport</keyword>
<keyword id="KW-0862">Zinc</keyword>